<protein>
    <recommendedName>
        <fullName evidence="1">Peptide chain release factor 3</fullName>
        <shortName evidence="1">RF-3</shortName>
    </recommendedName>
</protein>
<sequence>MTLSPYLQEVAKRRTFAIISHPDAGKTTITEKVLLFGQAIQTAGTVKGRGSNQHAKSDWMEMEKQRGISITTSVMQFPYHDCLVNLLDTPGHEDFSEDTYRTLTAVDCCLMVIDAAKGVEDRTRKLMEVTRLRDTPILTFMNKLDRDIRDPMELLDEVENELKIGCAPITWPIGCGKLFKGVYHLYKDETYLYQSGKGHTIQEVRIVKGLNNPDLDAAVGEDLAQQLRDELELVKGASNEFDKELFLAGEITPVFFGTALGNFGVDHMLDGLVEWAPAPMPRQTDTRTVQASEDKFTGFVFKIQANMDPKHRDRVAFMRVVSGKYEKGMKLRQVRTAKDVVISDALTFMAGDRSHVEEAYPGDILGLHNHGTIQIGDTFTQGEMMKFTGIPNFAPELFRRIRLKDPLKQKQLLKGLVQLSEEGAVQVFRPISNNDLIVGAVGVLQFDVVVSRLKSEYNVEAVYESVNVATARWVECADAKKFEEFKRKNESQLALDGGDNLAYIATSMVNLRLAQERYPDVQFHQTREH</sequence>
<evidence type="ECO:0000255" key="1">
    <source>
        <dbReference type="HAMAP-Rule" id="MF_00072"/>
    </source>
</evidence>
<organism>
    <name type="scientific">Escherichia coli O8 (strain IAI1)</name>
    <dbReference type="NCBI Taxonomy" id="585034"/>
    <lineage>
        <taxon>Bacteria</taxon>
        <taxon>Pseudomonadati</taxon>
        <taxon>Pseudomonadota</taxon>
        <taxon>Gammaproteobacteria</taxon>
        <taxon>Enterobacterales</taxon>
        <taxon>Enterobacteriaceae</taxon>
        <taxon>Escherichia</taxon>
    </lineage>
</organism>
<comment type="function">
    <text evidence="1">Increases the formation of ribosomal termination complexes and stimulates activities of RF-1 and RF-2. It binds guanine nucleotides and has strong preference for UGA stop codons. It may interact directly with the ribosome. The stimulation of RF-1 and RF-2 is significantly reduced by GTP and GDP, but not by GMP.</text>
</comment>
<comment type="subcellular location">
    <subcellularLocation>
        <location evidence="1">Cytoplasm</location>
    </subcellularLocation>
</comment>
<comment type="similarity">
    <text evidence="1">Belongs to the TRAFAC class translation factor GTPase superfamily. Classic translation factor GTPase family. PrfC subfamily.</text>
</comment>
<proteinExistence type="inferred from homology"/>
<keyword id="KW-0963">Cytoplasm</keyword>
<keyword id="KW-0342">GTP-binding</keyword>
<keyword id="KW-0547">Nucleotide-binding</keyword>
<keyword id="KW-0648">Protein biosynthesis</keyword>
<gene>
    <name evidence="1" type="primary">prfC</name>
    <name type="ordered locus">ECIAI1_4597</name>
</gene>
<feature type="chain" id="PRO_1000193527" description="Peptide chain release factor 3">
    <location>
        <begin position="1"/>
        <end position="529"/>
    </location>
</feature>
<feature type="domain" description="tr-type G">
    <location>
        <begin position="11"/>
        <end position="280"/>
    </location>
</feature>
<feature type="binding site" evidence="1">
    <location>
        <begin position="20"/>
        <end position="27"/>
    </location>
    <ligand>
        <name>GTP</name>
        <dbReference type="ChEBI" id="CHEBI:37565"/>
    </ligand>
</feature>
<feature type="binding site" evidence="1">
    <location>
        <begin position="88"/>
        <end position="92"/>
    </location>
    <ligand>
        <name>GTP</name>
        <dbReference type="ChEBI" id="CHEBI:37565"/>
    </ligand>
</feature>
<feature type="binding site" evidence="1">
    <location>
        <begin position="142"/>
        <end position="145"/>
    </location>
    <ligand>
        <name>GTP</name>
        <dbReference type="ChEBI" id="CHEBI:37565"/>
    </ligand>
</feature>
<reference key="1">
    <citation type="journal article" date="2009" name="PLoS Genet.">
        <title>Organised genome dynamics in the Escherichia coli species results in highly diverse adaptive paths.</title>
        <authorList>
            <person name="Touchon M."/>
            <person name="Hoede C."/>
            <person name="Tenaillon O."/>
            <person name="Barbe V."/>
            <person name="Baeriswyl S."/>
            <person name="Bidet P."/>
            <person name="Bingen E."/>
            <person name="Bonacorsi S."/>
            <person name="Bouchier C."/>
            <person name="Bouvet O."/>
            <person name="Calteau A."/>
            <person name="Chiapello H."/>
            <person name="Clermont O."/>
            <person name="Cruveiller S."/>
            <person name="Danchin A."/>
            <person name="Diard M."/>
            <person name="Dossat C."/>
            <person name="Karoui M.E."/>
            <person name="Frapy E."/>
            <person name="Garry L."/>
            <person name="Ghigo J.M."/>
            <person name="Gilles A.M."/>
            <person name="Johnson J."/>
            <person name="Le Bouguenec C."/>
            <person name="Lescat M."/>
            <person name="Mangenot S."/>
            <person name="Martinez-Jehanne V."/>
            <person name="Matic I."/>
            <person name="Nassif X."/>
            <person name="Oztas S."/>
            <person name="Petit M.A."/>
            <person name="Pichon C."/>
            <person name="Rouy Z."/>
            <person name="Ruf C.S."/>
            <person name="Schneider D."/>
            <person name="Tourret J."/>
            <person name="Vacherie B."/>
            <person name="Vallenet D."/>
            <person name="Medigue C."/>
            <person name="Rocha E.P.C."/>
            <person name="Denamur E."/>
        </authorList>
    </citation>
    <scope>NUCLEOTIDE SEQUENCE [LARGE SCALE GENOMIC DNA]</scope>
    <source>
        <strain>IAI1</strain>
    </source>
</reference>
<accession>B7LXT6</accession>
<dbReference type="EMBL" id="CU928160">
    <property type="protein sequence ID" value="CAR01337.1"/>
    <property type="molecule type" value="Genomic_DNA"/>
</dbReference>
<dbReference type="RefSeq" id="WP_000175949.1">
    <property type="nucleotide sequence ID" value="NC_011741.1"/>
</dbReference>
<dbReference type="SMR" id="B7LXT6"/>
<dbReference type="KEGG" id="ecr:ECIAI1_4597"/>
<dbReference type="HOGENOM" id="CLU_002794_2_1_6"/>
<dbReference type="GO" id="GO:0005829">
    <property type="term" value="C:cytosol"/>
    <property type="evidence" value="ECO:0007669"/>
    <property type="project" value="TreeGrafter"/>
</dbReference>
<dbReference type="GO" id="GO:0005525">
    <property type="term" value="F:GTP binding"/>
    <property type="evidence" value="ECO:0007669"/>
    <property type="project" value="UniProtKB-UniRule"/>
</dbReference>
<dbReference type="GO" id="GO:0003924">
    <property type="term" value="F:GTPase activity"/>
    <property type="evidence" value="ECO:0007669"/>
    <property type="project" value="InterPro"/>
</dbReference>
<dbReference type="GO" id="GO:0097216">
    <property type="term" value="F:guanosine tetraphosphate binding"/>
    <property type="evidence" value="ECO:0007669"/>
    <property type="project" value="UniProtKB-ARBA"/>
</dbReference>
<dbReference type="GO" id="GO:0016150">
    <property type="term" value="F:translation release factor activity, codon nonspecific"/>
    <property type="evidence" value="ECO:0007669"/>
    <property type="project" value="TreeGrafter"/>
</dbReference>
<dbReference type="GO" id="GO:0016149">
    <property type="term" value="F:translation release factor activity, codon specific"/>
    <property type="evidence" value="ECO:0007669"/>
    <property type="project" value="UniProtKB-UniRule"/>
</dbReference>
<dbReference type="GO" id="GO:0006449">
    <property type="term" value="P:regulation of translational termination"/>
    <property type="evidence" value="ECO:0007669"/>
    <property type="project" value="UniProtKB-UniRule"/>
</dbReference>
<dbReference type="CDD" id="cd04169">
    <property type="entry name" value="RF3"/>
    <property type="match status" value="1"/>
</dbReference>
<dbReference type="CDD" id="cd03689">
    <property type="entry name" value="RF3_II"/>
    <property type="match status" value="1"/>
</dbReference>
<dbReference type="CDD" id="cd16259">
    <property type="entry name" value="RF3_III"/>
    <property type="match status" value="1"/>
</dbReference>
<dbReference type="FunFam" id="2.40.30.10:FF:000040">
    <property type="entry name" value="Peptide chain release factor 3"/>
    <property type="match status" value="1"/>
</dbReference>
<dbReference type="FunFam" id="3.30.70.3280:FF:000001">
    <property type="entry name" value="Peptide chain release factor 3"/>
    <property type="match status" value="1"/>
</dbReference>
<dbReference type="FunFam" id="3.40.50.300:FF:000184">
    <property type="entry name" value="Peptide chain release factor 3"/>
    <property type="match status" value="1"/>
</dbReference>
<dbReference type="FunFam" id="3.40.50.300:FF:000253">
    <property type="entry name" value="Peptide chain release factor 3"/>
    <property type="match status" value="1"/>
</dbReference>
<dbReference type="Gene3D" id="3.40.50.300">
    <property type="entry name" value="P-loop containing nucleotide triphosphate hydrolases"/>
    <property type="match status" value="3"/>
</dbReference>
<dbReference type="Gene3D" id="3.30.70.3280">
    <property type="entry name" value="Peptide chain release factor 3, domain III"/>
    <property type="match status" value="1"/>
</dbReference>
<dbReference type="HAMAP" id="MF_00072">
    <property type="entry name" value="Rel_fac_3"/>
    <property type="match status" value="1"/>
</dbReference>
<dbReference type="InterPro" id="IPR053905">
    <property type="entry name" value="EF-G-like_DII"/>
</dbReference>
<dbReference type="InterPro" id="IPR035647">
    <property type="entry name" value="EFG_III/V"/>
</dbReference>
<dbReference type="InterPro" id="IPR031157">
    <property type="entry name" value="G_TR_CS"/>
</dbReference>
<dbReference type="InterPro" id="IPR027417">
    <property type="entry name" value="P-loop_NTPase"/>
</dbReference>
<dbReference type="InterPro" id="IPR004548">
    <property type="entry name" value="PrfC"/>
</dbReference>
<dbReference type="InterPro" id="IPR032090">
    <property type="entry name" value="RF3_C"/>
</dbReference>
<dbReference type="InterPro" id="IPR038467">
    <property type="entry name" value="RF3_dom_3_sf"/>
</dbReference>
<dbReference type="InterPro" id="IPR041732">
    <property type="entry name" value="RF3_GTP-bd"/>
</dbReference>
<dbReference type="InterPro" id="IPR005225">
    <property type="entry name" value="Small_GTP-bd"/>
</dbReference>
<dbReference type="InterPro" id="IPR000795">
    <property type="entry name" value="T_Tr_GTP-bd_dom"/>
</dbReference>
<dbReference type="InterPro" id="IPR009000">
    <property type="entry name" value="Transl_B-barrel_sf"/>
</dbReference>
<dbReference type="NCBIfam" id="TIGR00503">
    <property type="entry name" value="prfC"/>
    <property type="match status" value="1"/>
</dbReference>
<dbReference type="NCBIfam" id="NF001964">
    <property type="entry name" value="PRK00741.1"/>
    <property type="match status" value="1"/>
</dbReference>
<dbReference type="NCBIfam" id="TIGR00231">
    <property type="entry name" value="small_GTP"/>
    <property type="match status" value="1"/>
</dbReference>
<dbReference type="PANTHER" id="PTHR43556">
    <property type="entry name" value="PEPTIDE CHAIN RELEASE FACTOR RF3"/>
    <property type="match status" value="1"/>
</dbReference>
<dbReference type="PANTHER" id="PTHR43556:SF2">
    <property type="entry name" value="PEPTIDE CHAIN RELEASE FACTOR RF3"/>
    <property type="match status" value="1"/>
</dbReference>
<dbReference type="Pfam" id="PF22042">
    <property type="entry name" value="EF-G_D2"/>
    <property type="match status" value="1"/>
</dbReference>
<dbReference type="Pfam" id="PF00009">
    <property type="entry name" value="GTP_EFTU"/>
    <property type="match status" value="1"/>
</dbReference>
<dbReference type="Pfam" id="PF16658">
    <property type="entry name" value="RF3_C"/>
    <property type="match status" value="1"/>
</dbReference>
<dbReference type="PRINTS" id="PR00315">
    <property type="entry name" value="ELONGATNFCT"/>
</dbReference>
<dbReference type="SUPFAM" id="SSF54980">
    <property type="entry name" value="EF-G C-terminal domain-like"/>
    <property type="match status" value="1"/>
</dbReference>
<dbReference type="SUPFAM" id="SSF52540">
    <property type="entry name" value="P-loop containing nucleoside triphosphate hydrolases"/>
    <property type="match status" value="1"/>
</dbReference>
<dbReference type="SUPFAM" id="SSF50447">
    <property type="entry name" value="Translation proteins"/>
    <property type="match status" value="1"/>
</dbReference>
<dbReference type="PROSITE" id="PS00301">
    <property type="entry name" value="G_TR_1"/>
    <property type="match status" value="1"/>
</dbReference>
<dbReference type="PROSITE" id="PS51722">
    <property type="entry name" value="G_TR_2"/>
    <property type="match status" value="1"/>
</dbReference>
<name>RF3_ECO8A</name>